<proteinExistence type="inferred from homology"/>
<accession>B2K800</accession>
<feature type="chain" id="PRO_1000198330" description="UPF0303 protein YPTS_2661">
    <location>
        <begin position="1"/>
        <end position="171"/>
    </location>
</feature>
<sequence>MNLQQQLAYCQQHQQRLQLRHFDNETAWQLGEKIKRQAEKQGVALAIDITVNHQTLFSYAMAGTCAENQDWLRRKRNVVELLSTSSYAAGLMLQQRETSLDARYGVSLRDYAALGGAFPLQIKQAGIIGSVNVSGAPHLDDHNLLLQVLADFIGLPTGSIELLTPLTPLSV</sequence>
<dbReference type="EMBL" id="CP001048">
    <property type="protein sequence ID" value="ACC89621.1"/>
    <property type="molecule type" value="Genomic_DNA"/>
</dbReference>
<dbReference type="RefSeq" id="WP_011192659.1">
    <property type="nucleotide sequence ID" value="NZ_CP009780.1"/>
</dbReference>
<dbReference type="SMR" id="B2K800"/>
<dbReference type="KEGG" id="ypb:YPTS_2661"/>
<dbReference type="PATRIC" id="fig|502801.10.peg.2078"/>
<dbReference type="FunFam" id="3.30.450.150:FF:000003">
    <property type="entry name" value="UPF0303 protein YPTS_2661"/>
    <property type="match status" value="1"/>
</dbReference>
<dbReference type="Gene3D" id="3.30.450.150">
    <property type="entry name" value="Haem-degrading domain"/>
    <property type="match status" value="1"/>
</dbReference>
<dbReference type="HAMAP" id="MF_00761">
    <property type="entry name" value="UPF0303"/>
    <property type="match status" value="1"/>
</dbReference>
<dbReference type="InterPro" id="IPR005624">
    <property type="entry name" value="PduO/GlcC-like"/>
</dbReference>
<dbReference type="InterPro" id="IPR038084">
    <property type="entry name" value="PduO/GlcC-like_sf"/>
</dbReference>
<dbReference type="InterPro" id="IPR010371">
    <property type="entry name" value="YBR137W-like"/>
</dbReference>
<dbReference type="NCBIfam" id="NF002694">
    <property type="entry name" value="PRK02487.1-3"/>
    <property type="match status" value="1"/>
</dbReference>
<dbReference type="NCBIfam" id="NF002696">
    <property type="entry name" value="PRK02487.1-5"/>
    <property type="match status" value="1"/>
</dbReference>
<dbReference type="PANTHER" id="PTHR28255">
    <property type="match status" value="1"/>
</dbReference>
<dbReference type="PANTHER" id="PTHR28255:SF1">
    <property type="entry name" value="UPF0303 PROTEIN YBR137W"/>
    <property type="match status" value="1"/>
</dbReference>
<dbReference type="Pfam" id="PF03928">
    <property type="entry name" value="HbpS-like"/>
    <property type="match status" value="1"/>
</dbReference>
<dbReference type="PIRSF" id="PIRSF008757">
    <property type="entry name" value="UCP008757"/>
    <property type="match status" value="1"/>
</dbReference>
<dbReference type="SUPFAM" id="SSF143744">
    <property type="entry name" value="GlcG-like"/>
    <property type="match status" value="1"/>
</dbReference>
<evidence type="ECO:0000255" key="1">
    <source>
        <dbReference type="HAMAP-Rule" id="MF_00761"/>
    </source>
</evidence>
<protein>
    <recommendedName>
        <fullName evidence="1">UPF0303 protein YPTS_2661</fullName>
    </recommendedName>
</protein>
<organism>
    <name type="scientific">Yersinia pseudotuberculosis serotype IB (strain PB1/+)</name>
    <dbReference type="NCBI Taxonomy" id="502801"/>
    <lineage>
        <taxon>Bacteria</taxon>
        <taxon>Pseudomonadati</taxon>
        <taxon>Pseudomonadota</taxon>
        <taxon>Gammaproteobacteria</taxon>
        <taxon>Enterobacterales</taxon>
        <taxon>Yersiniaceae</taxon>
        <taxon>Yersinia</taxon>
    </lineage>
</organism>
<gene>
    <name type="ordered locus">YPTS_2661</name>
</gene>
<name>Y2661_YERPB</name>
<reference key="1">
    <citation type="submission" date="2008-04" db="EMBL/GenBank/DDBJ databases">
        <title>Complete sequence of Yersinia pseudotuberculosis PB1/+.</title>
        <authorList>
            <person name="Copeland A."/>
            <person name="Lucas S."/>
            <person name="Lapidus A."/>
            <person name="Glavina del Rio T."/>
            <person name="Dalin E."/>
            <person name="Tice H."/>
            <person name="Bruce D."/>
            <person name="Goodwin L."/>
            <person name="Pitluck S."/>
            <person name="Munk A.C."/>
            <person name="Brettin T."/>
            <person name="Detter J.C."/>
            <person name="Han C."/>
            <person name="Tapia R."/>
            <person name="Schmutz J."/>
            <person name="Larimer F."/>
            <person name="Land M."/>
            <person name="Hauser L."/>
            <person name="Challacombe J.F."/>
            <person name="Green L."/>
            <person name="Lindler L.E."/>
            <person name="Nikolich M.P."/>
            <person name="Richardson P."/>
        </authorList>
    </citation>
    <scope>NUCLEOTIDE SEQUENCE [LARGE SCALE GENOMIC DNA]</scope>
    <source>
        <strain>PB1/+</strain>
    </source>
</reference>
<comment type="similarity">
    <text evidence="1">Belongs to the UPF0303 family.</text>
</comment>